<reference key="1">
    <citation type="journal article" date="2002" name="J. Bacteriol.">
        <title>Whole-genome comparison of Mycobacterium tuberculosis clinical and laboratory strains.</title>
        <authorList>
            <person name="Fleischmann R.D."/>
            <person name="Alland D."/>
            <person name="Eisen J.A."/>
            <person name="Carpenter L."/>
            <person name="White O."/>
            <person name="Peterson J.D."/>
            <person name="DeBoy R.T."/>
            <person name="Dodson R.J."/>
            <person name="Gwinn M.L."/>
            <person name="Haft D.H."/>
            <person name="Hickey E.K."/>
            <person name="Kolonay J.F."/>
            <person name="Nelson W.C."/>
            <person name="Umayam L.A."/>
            <person name="Ermolaeva M.D."/>
            <person name="Salzberg S.L."/>
            <person name="Delcher A."/>
            <person name="Utterback T.R."/>
            <person name="Weidman J.F."/>
            <person name="Khouri H.M."/>
            <person name="Gill J."/>
            <person name="Mikula A."/>
            <person name="Bishai W."/>
            <person name="Jacobs W.R. Jr."/>
            <person name="Venter J.C."/>
            <person name="Fraser C.M."/>
        </authorList>
    </citation>
    <scope>NUCLEOTIDE SEQUENCE [LARGE SCALE GENOMIC DNA]</scope>
    <source>
        <strain>CDC 1551 / Oshkosh</strain>
    </source>
</reference>
<organism>
    <name type="scientific">Mycobacterium tuberculosis (strain CDC 1551 / Oshkosh)</name>
    <dbReference type="NCBI Taxonomy" id="83331"/>
    <lineage>
        <taxon>Bacteria</taxon>
        <taxon>Bacillati</taxon>
        <taxon>Actinomycetota</taxon>
        <taxon>Actinomycetes</taxon>
        <taxon>Mycobacteriales</taxon>
        <taxon>Mycobacteriaceae</taxon>
        <taxon>Mycobacterium</taxon>
        <taxon>Mycobacterium tuberculosis complex</taxon>
    </lineage>
</organism>
<accession>P9WLR2</accession>
<accession>L0T7T9</accession>
<accession>P64899</accession>
<accession>Q50602</accession>
<keyword id="KW-1185">Reference proteome</keyword>
<gene>
    <name type="ordered locus">MT1879.1</name>
</gene>
<sequence length="85" mass="9696">MRLCVCSAVDWTTHRSSAGEFCGCQLRTPKEQYLSVNLSGTRTARDYDASGKRWRPLAVLTRRWGKAIHLTVDRVAESLRRLACR</sequence>
<proteinExistence type="predicted"/>
<feature type="chain" id="PRO_0000427434" description="Uncharacterized protein MT1879.1">
    <location>
        <begin position="1"/>
        <end position="85"/>
    </location>
</feature>
<dbReference type="EMBL" id="AE000516">
    <property type="status" value="NOT_ANNOTATED_CDS"/>
    <property type="molecule type" value="Genomic_DNA"/>
</dbReference>
<dbReference type="PIR" id="H70721">
    <property type="entry name" value="H70721"/>
</dbReference>
<dbReference type="Proteomes" id="UP000001020">
    <property type="component" value="Chromosome"/>
</dbReference>
<protein>
    <recommendedName>
        <fullName>Uncharacterized protein MT1879.1</fullName>
    </recommendedName>
</protein>
<name>Y1831_MYCTO</name>